<accession>Q6GDJ6</accession>
<keyword id="KW-0274">FAD</keyword>
<keyword id="KW-0285">Flavoprotein</keyword>
<keyword id="KW-0560">Oxidoreductase</keyword>
<keyword id="KW-0816">Tricarboxylic acid cycle</keyword>
<comment type="catalytic activity">
    <reaction evidence="1">
        <text>(S)-malate + a quinone = a quinol + oxaloacetate</text>
        <dbReference type="Rhea" id="RHEA:46012"/>
        <dbReference type="ChEBI" id="CHEBI:15589"/>
        <dbReference type="ChEBI" id="CHEBI:16452"/>
        <dbReference type="ChEBI" id="CHEBI:24646"/>
        <dbReference type="ChEBI" id="CHEBI:132124"/>
        <dbReference type="EC" id="1.1.5.4"/>
    </reaction>
</comment>
<comment type="cofactor">
    <cofactor evidence="1">
        <name>FAD</name>
        <dbReference type="ChEBI" id="CHEBI:57692"/>
    </cofactor>
</comment>
<comment type="pathway">
    <text evidence="1">Carbohydrate metabolism; tricarboxylic acid cycle; oxaloacetate from (S)-malate (quinone route): step 1/1.</text>
</comment>
<comment type="similarity">
    <text evidence="1">Belongs to the MQO family.</text>
</comment>
<dbReference type="EC" id="1.1.5.4" evidence="1"/>
<dbReference type="EMBL" id="BX571856">
    <property type="protein sequence ID" value="CAG41662.1"/>
    <property type="molecule type" value="Genomic_DNA"/>
</dbReference>
<dbReference type="SMR" id="Q6GDJ6"/>
<dbReference type="KEGG" id="sar:SAR2685"/>
<dbReference type="HOGENOM" id="CLU_028151_0_0_9"/>
<dbReference type="UniPathway" id="UPA00223">
    <property type="reaction ID" value="UER01008"/>
</dbReference>
<dbReference type="Proteomes" id="UP000000596">
    <property type="component" value="Chromosome"/>
</dbReference>
<dbReference type="GO" id="GO:0047545">
    <property type="term" value="F:2-hydroxyglutarate dehydrogenase activity"/>
    <property type="evidence" value="ECO:0007669"/>
    <property type="project" value="TreeGrafter"/>
</dbReference>
<dbReference type="GO" id="GO:0008924">
    <property type="term" value="F:L-malate dehydrogenase (quinone) activity"/>
    <property type="evidence" value="ECO:0007669"/>
    <property type="project" value="UniProtKB-UniRule"/>
</dbReference>
<dbReference type="GO" id="GO:0006099">
    <property type="term" value="P:tricarboxylic acid cycle"/>
    <property type="evidence" value="ECO:0007669"/>
    <property type="project" value="UniProtKB-UniRule"/>
</dbReference>
<dbReference type="Gene3D" id="3.30.9.10">
    <property type="entry name" value="D-Amino Acid Oxidase, subunit A, domain 2"/>
    <property type="match status" value="1"/>
</dbReference>
<dbReference type="Gene3D" id="3.50.50.60">
    <property type="entry name" value="FAD/NAD(P)-binding domain"/>
    <property type="match status" value="1"/>
</dbReference>
<dbReference type="HAMAP" id="MF_00212">
    <property type="entry name" value="MQO"/>
    <property type="match status" value="1"/>
</dbReference>
<dbReference type="InterPro" id="IPR036188">
    <property type="entry name" value="FAD/NAD-bd_sf"/>
</dbReference>
<dbReference type="InterPro" id="IPR006231">
    <property type="entry name" value="MQO"/>
</dbReference>
<dbReference type="NCBIfam" id="NF040844">
    <property type="entry name" value="Lac_Quin_Ox_NO"/>
    <property type="match status" value="1"/>
</dbReference>
<dbReference type="NCBIfam" id="TIGR01320">
    <property type="entry name" value="mal_quin_oxido"/>
    <property type="match status" value="1"/>
</dbReference>
<dbReference type="NCBIfam" id="NF003606">
    <property type="entry name" value="PRK05257.2-1"/>
    <property type="match status" value="1"/>
</dbReference>
<dbReference type="NCBIfam" id="NF003611">
    <property type="entry name" value="PRK05257.3-2"/>
    <property type="match status" value="1"/>
</dbReference>
<dbReference type="NCBIfam" id="NF009875">
    <property type="entry name" value="PRK13339.1"/>
    <property type="match status" value="1"/>
</dbReference>
<dbReference type="PANTHER" id="PTHR43104">
    <property type="entry name" value="L-2-HYDROXYGLUTARATE DEHYDROGENASE, MITOCHONDRIAL"/>
    <property type="match status" value="1"/>
</dbReference>
<dbReference type="PANTHER" id="PTHR43104:SF2">
    <property type="entry name" value="L-2-HYDROXYGLUTARATE DEHYDROGENASE, MITOCHONDRIAL"/>
    <property type="match status" value="1"/>
</dbReference>
<dbReference type="Pfam" id="PF06039">
    <property type="entry name" value="Mqo"/>
    <property type="match status" value="1"/>
</dbReference>
<dbReference type="SUPFAM" id="SSF51905">
    <property type="entry name" value="FAD/NAD(P)-binding domain"/>
    <property type="match status" value="1"/>
</dbReference>
<gene>
    <name evidence="1" type="primary">mqo2</name>
    <name type="ordered locus">SAR2685</name>
</gene>
<feature type="chain" id="PRO_0000128744" description="Probable malate:quinone oxidoreductase 2">
    <location>
        <begin position="1"/>
        <end position="498"/>
    </location>
</feature>
<evidence type="ECO:0000255" key="1">
    <source>
        <dbReference type="HAMAP-Rule" id="MF_00212"/>
    </source>
</evidence>
<proteinExistence type="inferred from homology"/>
<name>MQO2_STAAR</name>
<organism>
    <name type="scientific">Staphylococcus aureus (strain MRSA252)</name>
    <dbReference type="NCBI Taxonomy" id="282458"/>
    <lineage>
        <taxon>Bacteria</taxon>
        <taxon>Bacillati</taxon>
        <taxon>Bacillota</taxon>
        <taxon>Bacilli</taxon>
        <taxon>Bacillales</taxon>
        <taxon>Staphylococcaceae</taxon>
        <taxon>Staphylococcus</taxon>
    </lineage>
</organism>
<reference key="1">
    <citation type="journal article" date="2004" name="Proc. Natl. Acad. Sci. U.S.A.">
        <title>Complete genomes of two clinical Staphylococcus aureus strains: evidence for the rapid evolution of virulence and drug resistance.</title>
        <authorList>
            <person name="Holden M.T.G."/>
            <person name="Feil E.J."/>
            <person name="Lindsay J.A."/>
            <person name="Peacock S.J."/>
            <person name="Day N.P.J."/>
            <person name="Enright M.C."/>
            <person name="Foster T.J."/>
            <person name="Moore C.E."/>
            <person name="Hurst L."/>
            <person name="Atkin R."/>
            <person name="Barron A."/>
            <person name="Bason N."/>
            <person name="Bentley S.D."/>
            <person name="Chillingworth C."/>
            <person name="Chillingworth T."/>
            <person name="Churcher C."/>
            <person name="Clark L."/>
            <person name="Corton C."/>
            <person name="Cronin A."/>
            <person name="Doggett J."/>
            <person name="Dowd L."/>
            <person name="Feltwell T."/>
            <person name="Hance Z."/>
            <person name="Harris B."/>
            <person name="Hauser H."/>
            <person name="Holroyd S."/>
            <person name="Jagels K."/>
            <person name="James K.D."/>
            <person name="Lennard N."/>
            <person name="Line A."/>
            <person name="Mayes R."/>
            <person name="Moule S."/>
            <person name="Mungall K."/>
            <person name="Ormond D."/>
            <person name="Quail M.A."/>
            <person name="Rabbinowitsch E."/>
            <person name="Rutherford K.M."/>
            <person name="Sanders M."/>
            <person name="Sharp S."/>
            <person name="Simmonds M."/>
            <person name="Stevens K."/>
            <person name="Whitehead S."/>
            <person name="Barrell B.G."/>
            <person name="Spratt B.G."/>
            <person name="Parkhill J."/>
        </authorList>
    </citation>
    <scope>NUCLEOTIDE SEQUENCE [LARGE SCALE GENOMIC DNA]</scope>
    <source>
        <strain>MRSA252</strain>
    </source>
</reference>
<protein>
    <recommendedName>
        <fullName evidence="1">Probable malate:quinone oxidoreductase 2</fullName>
        <ecNumber evidence="1">1.1.5.4</ecNumber>
    </recommendedName>
    <alternativeName>
        <fullName evidence="1">MQO 2</fullName>
    </alternativeName>
    <alternativeName>
        <fullName evidence="1">Malate dehydrogenase [quinone] 2</fullName>
    </alternativeName>
</protein>
<sequence length="498" mass="55999">MAKSNSKDIVLIGAGVLSTTFGSMLKEIEPDWNIHVYERLDRPAIESSNERNNAGTGHAALCELNYTVLQPDGSIDIEKAKVINEEFEISKQFWGHLVKSGSIENPREFINPLPHISYVRGKNNVKFLKDRYEAMKAFPMFDNIEYTEDIEVMKKWIPLMMKGREDNPGIMAASKIDEGTDVNFGELTRKMAKSIEAHPNATVQFNHEVVDFEQLSNGQWEVTVKNRLTGEKFKQVTDYVFIGAGGGAIPLLQKTGIPESKHLGGFPISGQFLACTNPQVIEQHDAKVYGKEPPGTPPMTVPHLDTRYIDGQRTLLFGPFANVGPKFLKNGSNLDLFKSVKTYNITTLLAAAVKNLPLIKYSFDQVIMTKEGCMNHLRTFYPEARNEDWQLYTAGKRVQVIKDTPEHGKGFIQFGTEVVNSQDHTVIALLGESPGASTSVSVALEVLERNFPEYKTEWAPKIKKMIPSYGESLIEDEKLMRKIRKQTSKDLELGYYEN</sequence>